<feature type="chain" id="PRO_0000269983" description="Macrolide export ATP-binding/permease protein MacB">
    <location>
        <begin position="1"/>
        <end position="653"/>
    </location>
</feature>
<feature type="transmembrane region" description="Helical" evidence="1">
    <location>
        <begin position="275"/>
        <end position="295"/>
    </location>
</feature>
<feature type="transmembrane region" description="Helical" evidence="1">
    <location>
        <begin position="525"/>
        <end position="545"/>
    </location>
</feature>
<feature type="transmembrane region" description="Helical" evidence="1">
    <location>
        <begin position="576"/>
        <end position="596"/>
    </location>
</feature>
<feature type="transmembrane region" description="Helical" evidence="1">
    <location>
        <begin position="616"/>
        <end position="636"/>
    </location>
</feature>
<feature type="domain" description="ABC transporter" evidence="1">
    <location>
        <begin position="6"/>
        <end position="244"/>
    </location>
</feature>
<feature type="binding site" evidence="1">
    <location>
        <begin position="42"/>
        <end position="49"/>
    </location>
    <ligand>
        <name>ATP</name>
        <dbReference type="ChEBI" id="CHEBI:30616"/>
    </ligand>
</feature>
<keyword id="KW-0046">Antibiotic resistance</keyword>
<keyword id="KW-0067">ATP-binding</keyword>
<keyword id="KW-0997">Cell inner membrane</keyword>
<keyword id="KW-1003">Cell membrane</keyword>
<keyword id="KW-0472">Membrane</keyword>
<keyword id="KW-0547">Nucleotide-binding</keyword>
<keyword id="KW-1278">Translocase</keyword>
<keyword id="KW-0812">Transmembrane</keyword>
<keyword id="KW-1133">Transmembrane helix</keyword>
<keyword id="KW-0813">Transport</keyword>
<sequence>MTTPLIELQGVSRSYCQGDATVNVLNDIHLRIDPGEMVAIIGSSGSGKSTLMNILGCLDRPSGGEYRIRGRDVAQLTPDALAALRREHVGFIFQHYHLMPELSAVGNVEIPAVYANRPRQERRRRAAALLDRLGLAGKHHHCPAQLSGGQQQRVSIARALMNGGEIILADEPTGALDSASGKEVLAILTELNRQGHTLVIVTHDMAVARHARRIIEIRDGRIVADTRTDQTPLAPPLLPCSAHPRRRRGAQFADRVRESLHMALKAMNAHRMRTLLTMAGIVFGIAAVVTVVGLGEGAREQTLRRINFLGTNVISIYPGKDFFDENAGAIRTLVPADAVALARQGYVDSVSPELGTSARLRYRNKSANVDVIGVGESYFRVRGLSLAEGRTFTSQQVAQATTDAIIDDNARRTLFAATGQSPLGQTLLLNTMAVRVIGVAAADTNITGYHSDRIHIWLPYTTILHRLMGQQHVNGIVVSTGAGIDNAAAERTIEQLMLQRHGVKDFMLFNDDKIRRSVMKTSMTFSVLITMVAMIALFIGSLGVMNIMLVSVTERTHEIGVRMAVGARRGDIMQQFLIEAVLVCLTGGLLGVLLALSGGALFSALAGDIFPMVTSWPAVSGAFLCACAIGMVFGYWPARNAARLNPVEALSSE</sequence>
<name>MACB_SODGM</name>
<comment type="function">
    <text evidence="1">Part of the tripartite efflux system MacAB-TolC. MacB is a non-canonical ABC transporter that contains transmembrane domains (TMD), which form a pore in the inner membrane, and an ATP-binding domain (NBD), which is responsible for energy generation. Confers resistance against macrolides.</text>
</comment>
<comment type="subunit">
    <text evidence="1">Homodimer. Part of the tripartite efflux system MacAB-TolC, which is composed of an inner membrane transporter, MacB, a periplasmic membrane fusion protein, MacA, and an outer membrane component, TolC. The complex forms a large protein conduit and can translocate molecules across both the inner and outer membranes. Interacts with MacA.</text>
</comment>
<comment type="subcellular location">
    <subcellularLocation>
        <location evidence="1">Cell inner membrane</location>
        <topology evidence="1">Multi-pass membrane protein</topology>
    </subcellularLocation>
</comment>
<comment type="similarity">
    <text evidence="1">Belongs to the ABC transporter superfamily. Macrolide exporter (TC 3.A.1.122) family.</text>
</comment>
<accession>Q2NSZ1</accession>
<reference key="1">
    <citation type="journal article" date="2006" name="Genome Res.">
        <title>Massive genome erosion and functional adaptations provide insights into the symbiotic lifestyle of Sodalis glossinidius in the tsetse host.</title>
        <authorList>
            <person name="Toh H."/>
            <person name="Weiss B.L."/>
            <person name="Perkin S.A.H."/>
            <person name="Yamashita A."/>
            <person name="Oshima K."/>
            <person name="Hattori M."/>
            <person name="Aksoy S."/>
        </authorList>
    </citation>
    <scope>NUCLEOTIDE SEQUENCE [LARGE SCALE GENOMIC DNA]</scope>
    <source>
        <strain>morsitans</strain>
    </source>
</reference>
<organism>
    <name type="scientific">Sodalis glossinidius (strain morsitans)</name>
    <dbReference type="NCBI Taxonomy" id="343509"/>
    <lineage>
        <taxon>Bacteria</taxon>
        <taxon>Pseudomonadati</taxon>
        <taxon>Pseudomonadota</taxon>
        <taxon>Gammaproteobacteria</taxon>
        <taxon>Enterobacterales</taxon>
        <taxon>Bruguierivoracaceae</taxon>
        <taxon>Sodalis</taxon>
    </lineage>
</organism>
<protein>
    <recommendedName>
        <fullName evidence="1">Macrolide export ATP-binding/permease protein MacB</fullName>
        <ecNumber evidence="1">7.6.2.-</ecNumber>
    </recommendedName>
</protein>
<gene>
    <name evidence="1" type="primary">macB</name>
    <name type="ordered locus">SG1459</name>
</gene>
<proteinExistence type="inferred from homology"/>
<evidence type="ECO:0000255" key="1">
    <source>
        <dbReference type="HAMAP-Rule" id="MF_01720"/>
    </source>
</evidence>
<dbReference type="EC" id="7.6.2.-" evidence="1"/>
<dbReference type="EMBL" id="AP008232">
    <property type="protein sequence ID" value="BAE74734.1"/>
    <property type="molecule type" value="Genomic_DNA"/>
</dbReference>
<dbReference type="RefSeq" id="WP_011411279.1">
    <property type="nucleotide sequence ID" value="NC_007712.1"/>
</dbReference>
<dbReference type="SMR" id="Q2NSZ1"/>
<dbReference type="STRING" id="343509.SG1459"/>
<dbReference type="KEGG" id="sgl:SG1459"/>
<dbReference type="eggNOG" id="COG0577">
    <property type="taxonomic scope" value="Bacteria"/>
</dbReference>
<dbReference type="eggNOG" id="COG1136">
    <property type="taxonomic scope" value="Bacteria"/>
</dbReference>
<dbReference type="HOGENOM" id="CLU_000604_78_2_6"/>
<dbReference type="OrthoDB" id="9770036at2"/>
<dbReference type="BioCyc" id="SGLO343509:SGP1_RS12935-MONOMER"/>
<dbReference type="Proteomes" id="UP000001932">
    <property type="component" value="Chromosome"/>
</dbReference>
<dbReference type="GO" id="GO:0005886">
    <property type="term" value="C:plasma membrane"/>
    <property type="evidence" value="ECO:0007669"/>
    <property type="project" value="UniProtKB-SubCell"/>
</dbReference>
<dbReference type="GO" id="GO:0005524">
    <property type="term" value="F:ATP binding"/>
    <property type="evidence" value="ECO:0007669"/>
    <property type="project" value="UniProtKB-KW"/>
</dbReference>
<dbReference type="GO" id="GO:0016887">
    <property type="term" value="F:ATP hydrolysis activity"/>
    <property type="evidence" value="ECO:0007669"/>
    <property type="project" value="InterPro"/>
</dbReference>
<dbReference type="GO" id="GO:0022857">
    <property type="term" value="F:transmembrane transporter activity"/>
    <property type="evidence" value="ECO:0007669"/>
    <property type="project" value="TreeGrafter"/>
</dbReference>
<dbReference type="GO" id="GO:0046677">
    <property type="term" value="P:response to antibiotic"/>
    <property type="evidence" value="ECO:0007669"/>
    <property type="project" value="UniProtKB-KW"/>
</dbReference>
<dbReference type="CDD" id="cd03255">
    <property type="entry name" value="ABC_MJ0796_LolCDE_FtsE"/>
    <property type="match status" value="1"/>
</dbReference>
<dbReference type="FunFam" id="3.40.50.300:FF:000032">
    <property type="entry name" value="Export ABC transporter ATP-binding protein"/>
    <property type="match status" value="1"/>
</dbReference>
<dbReference type="Gene3D" id="3.40.50.300">
    <property type="entry name" value="P-loop containing nucleotide triphosphate hydrolases"/>
    <property type="match status" value="1"/>
</dbReference>
<dbReference type="InterPro" id="IPR003593">
    <property type="entry name" value="AAA+_ATPase"/>
</dbReference>
<dbReference type="InterPro" id="IPR003838">
    <property type="entry name" value="ABC3_permease_C"/>
</dbReference>
<dbReference type="InterPro" id="IPR003439">
    <property type="entry name" value="ABC_transporter-like_ATP-bd"/>
</dbReference>
<dbReference type="InterPro" id="IPR017871">
    <property type="entry name" value="ABC_transporter-like_CS"/>
</dbReference>
<dbReference type="InterPro" id="IPR017911">
    <property type="entry name" value="MacB-like_ATP-bd"/>
</dbReference>
<dbReference type="InterPro" id="IPR025857">
    <property type="entry name" value="MacB_PCD"/>
</dbReference>
<dbReference type="InterPro" id="IPR050250">
    <property type="entry name" value="Macrolide_Exporter_MacB"/>
</dbReference>
<dbReference type="InterPro" id="IPR027417">
    <property type="entry name" value="P-loop_NTPase"/>
</dbReference>
<dbReference type="PANTHER" id="PTHR30572:SF14">
    <property type="entry name" value="MACROLIDE EXPORT ATP-BINDING_PERMEASE PROTEIN MACB"/>
    <property type="match status" value="1"/>
</dbReference>
<dbReference type="PANTHER" id="PTHR30572">
    <property type="entry name" value="MEMBRANE COMPONENT OF TRANSPORTER-RELATED"/>
    <property type="match status" value="1"/>
</dbReference>
<dbReference type="Pfam" id="PF00005">
    <property type="entry name" value="ABC_tran"/>
    <property type="match status" value="1"/>
</dbReference>
<dbReference type="Pfam" id="PF02687">
    <property type="entry name" value="FtsX"/>
    <property type="match status" value="1"/>
</dbReference>
<dbReference type="Pfam" id="PF12704">
    <property type="entry name" value="MacB_PCD"/>
    <property type="match status" value="1"/>
</dbReference>
<dbReference type="SMART" id="SM00382">
    <property type="entry name" value="AAA"/>
    <property type="match status" value="1"/>
</dbReference>
<dbReference type="SUPFAM" id="SSF52540">
    <property type="entry name" value="P-loop containing nucleoside triphosphate hydrolases"/>
    <property type="match status" value="1"/>
</dbReference>
<dbReference type="PROSITE" id="PS00211">
    <property type="entry name" value="ABC_TRANSPORTER_1"/>
    <property type="match status" value="1"/>
</dbReference>
<dbReference type="PROSITE" id="PS50893">
    <property type="entry name" value="ABC_TRANSPORTER_2"/>
    <property type="match status" value="1"/>
</dbReference>
<dbReference type="PROSITE" id="PS51267">
    <property type="entry name" value="MACB"/>
    <property type="match status" value="1"/>
</dbReference>